<keyword id="KW-0131">Cell cycle</keyword>
<keyword id="KW-0132">Cell division</keyword>
<keyword id="KW-1185">Reference proteome</keyword>
<gene>
    <name evidence="1" type="primary">minE</name>
    <name type="ordered locus">CBO2996</name>
    <name type="ordered locus">CLC_2893</name>
</gene>
<accession>A5I676</accession>
<accession>A7G7F9</accession>
<evidence type="ECO:0000255" key="1">
    <source>
        <dbReference type="HAMAP-Rule" id="MF_00262"/>
    </source>
</evidence>
<feature type="chain" id="PRO_1000047781" description="Cell division topological specificity factor">
    <location>
        <begin position="1"/>
        <end position="87"/>
    </location>
</feature>
<organism>
    <name type="scientific">Clostridium botulinum (strain Hall / ATCC 3502 / NCTC 13319 / Type A)</name>
    <dbReference type="NCBI Taxonomy" id="441771"/>
    <lineage>
        <taxon>Bacteria</taxon>
        <taxon>Bacillati</taxon>
        <taxon>Bacillota</taxon>
        <taxon>Clostridia</taxon>
        <taxon>Eubacteriales</taxon>
        <taxon>Clostridiaceae</taxon>
        <taxon>Clostridium</taxon>
    </lineage>
</organism>
<reference key="1">
    <citation type="journal article" date="2007" name="Genome Res.">
        <title>Genome sequence of a proteolytic (Group I) Clostridium botulinum strain Hall A and comparative analysis of the clostridial genomes.</title>
        <authorList>
            <person name="Sebaihia M."/>
            <person name="Peck M.W."/>
            <person name="Minton N.P."/>
            <person name="Thomson N.R."/>
            <person name="Holden M.T.G."/>
            <person name="Mitchell W.J."/>
            <person name="Carter A.T."/>
            <person name="Bentley S.D."/>
            <person name="Mason D.R."/>
            <person name="Crossman L."/>
            <person name="Paul C.J."/>
            <person name="Ivens A."/>
            <person name="Wells-Bennik M.H.J."/>
            <person name="Davis I.J."/>
            <person name="Cerdeno-Tarraga A.M."/>
            <person name="Churcher C."/>
            <person name="Quail M.A."/>
            <person name="Chillingworth T."/>
            <person name="Feltwell T."/>
            <person name="Fraser A."/>
            <person name="Goodhead I."/>
            <person name="Hance Z."/>
            <person name="Jagels K."/>
            <person name="Larke N."/>
            <person name="Maddison M."/>
            <person name="Moule S."/>
            <person name="Mungall K."/>
            <person name="Norbertczak H."/>
            <person name="Rabbinowitsch E."/>
            <person name="Sanders M."/>
            <person name="Simmonds M."/>
            <person name="White B."/>
            <person name="Whithead S."/>
            <person name="Parkhill J."/>
        </authorList>
    </citation>
    <scope>NUCLEOTIDE SEQUENCE [LARGE SCALE GENOMIC DNA]</scope>
    <source>
        <strain>Hall / ATCC 3502 / NCTC 13319 / Type A</strain>
    </source>
</reference>
<reference key="2">
    <citation type="journal article" date="2007" name="PLoS ONE">
        <title>Analysis of the neurotoxin complex genes in Clostridium botulinum A1-A4 and B1 strains: BoNT/A3, /Ba4 and /B1 clusters are located within plasmids.</title>
        <authorList>
            <person name="Smith T.J."/>
            <person name="Hill K.K."/>
            <person name="Foley B.T."/>
            <person name="Detter J.C."/>
            <person name="Munk A.C."/>
            <person name="Bruce D.C."/>
            <person name="Doggett N.A."/>
            <person name="Smith L.A."/>
            <person name="Marks J.D."/>
            <person name="Xie G."/>
            <person name="Brettin T.S."/>
        </authorList>
    </citation>
    <scope>NUCLEOTIDE SEQUENCE [LARGE SCALE GENOMIC DNA]</scope>
    <source>
        <strain>Hall / ATCC 3502 / NCTC 13319 / Type A</strain>
    </source>
</reference>
<comment type="function">
    <text evidence="1">Prevents the cell division inhibition by proteins MinC and MinD at internal division sites while permitting inhibition at polar sites. This ensures cell division at the proper site by restricting the formation of a division septum at the midpoint of the long axis of the cell.</text>
</comment>
<comment type="similarity">
    <text evidence="1">Belongs to the MinE family.</text>
</comment>
<dbReference type="EMBL" id="CP000727">
    <property type="protein sequence ID" value="ABS37438.1"/>
    <property type="molecule type" value="Genomic_DNA"/>
</dbReference>
<dbReference type="EMBL" id="AM412317">
    <property type="protein sequence ID" value="CAL84558.1"/>
    <property type="molecule type" value="Genomic_DNA"/>
</dbReference>
<dbReference type="RefSeq" id="WP_003358099.1">
    <property type="nucleotide sequence ID" value="NC_009698.1"/>
</dbReference>
<dbReference type="RefSeq" id="YP_001255488.1">
    <property type="nucleotide sequence ID" value="NC_009495.1"/>
</dbReference>
<dbReference type="RefSeq" id="YP_001388724.1">
    <property type="nucleotide sequence ID" value="NC_009698.1"/>
</dbReference>
<dbReference type="SMR" id="A5I676"/>
<dbReference type="GeneID" id="5187008"/>
<dbReference type="KEGG" id="cbh:CLC_2893"/>
<dbReference type="KEGG" id="cbo:CBO2996"/>
<dbReference type="PATRIC" id="fig|413999.7.peg.2974"/>
<dbReference type="HOGENOM" id="CLU_137929_1_0_9"/>
<dbReference type="PRO" id="PR:A5I676"/>
<dbReference type="Proteomes" id="UP000001986">
    <property type="component" value="Chromosome"/>
</dbReference>
<dbReference type="GO" id="GO:0005886">
    <property type="term" value="C:plasma membrane"/>
    <property type="evidence" value="ECO:0000318"/>
    <property type="project" value="GO_Central"/>
</dbReference>
<dbReference type="GO" id="GO:0000918">
    <property type="term" value="P:division septum site selection"/>
    <property type="evidence" value="ECO:0000318"/>
    <property type="project" value="GO_Central"/>
</dbReference>
<dbReference type="GO" id="GO:0032955">
    <property type="term" value="P:regulation of division septum assembly"/>
    <property type="evidence" value="ECO:0007669"/>
    <property type="project" value="InterPro"/>
</dbReference>
<dbReference type="FunFam" id="3.30.1070.10:FF:000003">
    <property type="entry name" value="Cell division topological specificity factor"/>
    <property type="match status" value="1"/>
</dbReference>
<dbReference type="Gene3D" id="3.30.1070.10">
    <property type="entry name" value="Cell division topological specificity factor MinE"/>
    <property type="match status" value="1"/>
</dbReference>
<dbReference type="HAMAP" id="MF_00262">
    <property type="entry name" value="MinE"/>
    <property type="match status" value="1"/>
</dbReference>
<dbReference type="InterPro" id="IPR005527">
    <property type="entry name" value="MinE"/>
</dbReference>
<dbReference type="InterPro" id="IPR036707">
    <property type="entry name" value="MinE_sf"/>
</dbReference>
<dbReference type="NCBIfam" id="TIGR01215">
    <property type="entry name" value="minE"/>
    <property type="match status" value="1"/>
</dbReference>
<dbReference type="NCBIfam" id="NF001422">
    <property type="entry name" value="PRK00296.1"/>
    <property type="match status" value="1"/>
</dbReference>
<dbReference type="Pfam" id="PF03776">
    <property type="entry name" value="MinE"/>
    <property type="match status" value="1"/>
</dbReference>
<dbReference type="SUPFAM" id="SSF55229">
    <property type="entry name" value="Cell division protein MinE topological specificity domain"/>
    <property type="match status" value="1"/>
</dbReference>
<protein>
    <recommendedName>
        <fullName evidence="1">Cell division topological specificity factor</fullName>
    </recommendedName>
</protein>
<sequence length="87" mass="10027">MDLFKFFSKQSSKDVAKERLKLILIQDRNSISPDVLESIREDMLKVISKYIEIDNEDVDIKMSSVEEIEGMSPALIASIPIKRIKKK</sequence>
<name>MINE_CLOBH</name>
<proteinExistence type="inferred from homology"/>